<accession>Q9SFE9</accession>
<accession>A0ME82</accession>
<proteinExistence type="evidence at transcript level"/>
<comment type="function">
    <text evidence="2">GDP-mannose transporter that may be involved in the import of GDP-mannose from the cytoplasm into the Golgi lumen.</text>
</comment>
<comment type="subcellular location">
    <subcellularLocation>
        <location evidence="2">Golgi apparatus membrane</location>
        <topology evidence="2">Multi-pass membrane protein</topology>
    </subcellularLocation>
</comment>
<comment type="tissue specificity">
    <text evidence="2">Expressed in rosette leaves, flowers and siliques.</text>
</comment>
<comment type="similarity">
    <text evidence="3">Belongs to the TPT transporter family. TPT (TC 2.A.7.9) subfamily.</text>
</comment>
<comment type="sequence caution" evidence="3">
    <conflict type="erroneous termination">
        <sequence resource="EMBL-CDS" id="ABK28407"/>
    </conflict>
    <text>Extended C-terminus.</text>
</comment>
<gene>
    <name type="primary">GONST5</name>
    <name type="ordered locus">At1g21870</name>
    <name type="ORF">GT26F17.9</name>
</gene>
<protein>
    <recommendedName>
        <fullName>GDP-mannose transporter GONST5</fullName>
    </recommendedName>
    <alternativeName>
        <fullName>Protein GOLGI NUCLEOTIDE SUGAR TRANSPORTER 5</fullName>
    </alternativeName>
</protein>
<sequence length="341" mass="38848">MEEGSLWRQWTMFRSLLSILQWWGFNVTVIIMNKWIFQKLDFKFPLSVSCVHFICSSIGAYIVIKVLKLKPLIVVDPEDRWRRIFPMSFVFCINIVLGNISLRYIPVSFMQTIKSLTPATTVVLQWLVWRKYFDWRIWASLVPIVGGILLTSITELSFNVFGFCAALFGCLATSTKTILAESLLHGYKFDSINTVYYMAPFATMILGLPAFLLERNGILDWFEAHPSPWSALIILFNSGVLAFCLNFSIFYVIQSTTAVTFNVAGNLKVAVAVFVSWMIFRNPISPMNAVGCGITLVGCTFYGYVRHMLSQQQPGTPRTPRTPRNKMELIPLVNDKLESKI</sequence>
<keyword id="KW-0333">Golgi apparatus</keyword>
<keyword id="KW-0472">Membrane</keyword>
<keyword id="KW-1185">Reference proteome</keyword>
<keyword id="KW-0762">Sugar transport</keyword>
<keyword id="KW-0812">Transmembrane</keyword>
<keyword id="KW-1133">Transmembrane helix</keyword>
<keyword id="KW-0813">Transport</keyword>
<dbReference type="EMBL" id="AJ551328">
    <property type="protein sequence ID" value="CAD83089.1"/>
    <property type="molecule type" value="mRNA"/>
</dbReference>
<dbReference type="EMBL" id="AC013482">
    <property type="protein sequence ID" value="AAF16530.1"/>
    <property type="molecule type" value="Genomic_DNA"/>
</dbReference>
<dbReference type="EMBL" id="CP002684">
    <property type="protein sequence ID" value="AEE30166.1"/>
    <property type="molecule type" value="Genomic_DNA"/>
</dbReference>
<dbReference type="EMBL" id="DQ446272">
    <property type="protein sequence ID" value="ABE65640.1"/>
    <property type="molecule type" value="mRNA"/>
</dbReference>
<dbReference type="EMBL" id="DQ652850">
    <property type="protein sequence ID" value="ABK28407.1"/>
    <property type="status" value="ALT_SEQ"/>
    <property type="molecule type" value="mRNA"/>
</dbReference>
<dbReference type="RefSeq" id="NP_173605.1">
    <property type="nucleotide sequence ID" value="NM_102035.2"/>
</dbReference>
<dbReference type="SMR" id="Q9SFE9"/>
<dbReference type="BioGRID" id="24028">
    <property type="interactions" value="28"/>
</dbReference>
<dbReference type="FunCoup" id="Q9SFE9">
    <property type="interactions" value="66"/>
</dbReference>
<dbReference type="IntAct" id="Q9SFE9">
    <property type="interactions" value="28"/>
</dbReference>
<dbReference type="STRING" id="3702.Q9SFE9"/>
<dbReference type="PaxDb" id="3702-AT1G21870.1"/>
<dbReference type="EnsemblPlants" id="AT1G21870.1">
    <property type="protein sequence ID" value="AT1G21870.1"/>
    <property type="gene ID" value="AT1G21870"/>
</dbReference>
<dbReference type="GeneID" id="838789"/>
<dbReference type="Gramene" id="AT1G21870.1">
    <property type="protein sequence ID" value="AT1G21870.1"/>
    <property type="gene ID" value="AT1G21870"/>
</dbReference>
<dbReference type="KEGG" id="ath:AT1G21870"/>
<dbReference type="Araport" id="AT1G21870"/>
<dbReference type="TAIR" id="AT1G21870">
    <property type="gene designation" value="GONST5"/>
</dbReference>
<dbReference type="eggNOG" id="KOG1441">
    <property type="taxonomic scope" value="Eukaryota"/>
</dbReference>
<dbReference type="HOGENOM" id="CLU_022332_2_2_1"/>
<dbReference type="InParanoid" id="Q9SFE9"/>
<dbReference type="OMA" id="TSTKTIM"/>
<dbReference type="PhylomeDB" id="Q9SFE9"/>
<dbReference type="PRO" id="PR:Q9SFE9"/>
<dbReference type="Proteomes" id="UP000006548">
    <property type="component" value="Chromosome 1"/>
</dbReference>
<dbReference type="ExpressionAtlas" id="Q9SFE9">
    <property type="expression patterns" value="baseline and differential"/>
</dbReference>
<dbReference type="GO" id="GO:0005794">
    <property type="term" value="C:Golgi apparatus"/>
    <property type="evidence" value="ECO:0000314"/>
    <property type="project" value="TAIR"/>
</dbReference>
<dbReference type="GO" id="GO:0000139">
    <property type="term" value="C:Golgi membrane"/>
    <property type="evidence" value="ECO:0007669"/>
    <property type="project" value="UniProtKB-SubCell"/>
</dbReference>
<dbReference type="GO" id="GO:0015780">
    <property type="term" value="P:nucleotide-sugar transmembrane transport"/>
    <property type="evidence" value="ECO:0000316"/>
    <property type="project" value="TAIR"/>
</dbReference>
<dbReference type="FunFam" id="1.10.3730.20:FF:000015">
    <property type="entry name" value="UDP-galactose transporter 1-like"/>
    <property type="match status" value="1"/>
</dbReference>
<dbReference type="Gene3D" id="1.10.3730.20">
    <property type="match status" value="1"/>
</dbReference>
<dbReference type="InterPro" id="IPR004853">
    <property type="entry name" value="Sugar_P_trans_dom"/>
</dbReference>
<dbReference type="InterPro" id="IPR050186">
    <property type="entry name" value="TPT_transporter"/>
</dbReference>
<dbReference type="PANTHER" id="PTHR11132">
    <property type="entry name" value="SOLUTE CARRIER FAMILY 35"/>
    <property type="match status" value="1"/>
</dbReference>
<dbReference type="Pfam" id="PF03151">
    <property type="entry name" value="TPT"/>
    <property type="match status" value="1"/>
</dbReference>
<dbReference type="SUPFAM" id="SSF103481">
    <property type="entry name" value="Multidrug resistance efflux transporter EmrE"/>
    <property type="match status" value="2"/>
</dbReference>
<evidence type="ECO:0000255" key="1"/>
<evidence type="ECO:0000269" key="2">
    <source>
    </source>
</evidence>
<evidence type="ECO:0000305" key="3"/>
<feature type="chain" id="PRO_0000406104" description="GDP-mannose transporter GONST5">
    <location>
        <begin position="1"/>
        <end position="341"/>
    </location>
</feature>
<feature type="transmembrane region" description="Helical" evidence="1">
    <location>
        <begin position="17"/>
        <end position="37"/>
    </location>
</feature>
<feature type="transmembrane region" description="Helical" evidence="1">
    <location>
        <begin position="44"/>
        <end position="64"/>
    </location>
</feature>
<feature type="transmembrane region" description="Helical" evidence="1">
    <location>
        <begin position="89"/>
        <end position="109"/>
    </location>
</feature>
<feature type="transmembrane region" description="Helical" evidence="1">
    <location>
        <begin position="141"/>
        <end position="161"/>
    </location>
</feature>
<feature type="transmembrane region" description="Helical" evidence="1">
    <location>
        <begin position="192"/>
        <end position="212"/>
    </location>
</feature>
<feature type="transmembrane region" description="Helical" evidence="1">
    <location>
        <begin position="233"/>
        <end position="253"/>
    </location>
</feature>
<feature type="transmembrane region" description="Helical" evidence="1">
    <location>
        <begin position="260"/>
        <end position="280"/>
    </location>
</feature>
<feature type="transmembrane region" description="Helical" evidence="1">
    <location>
        <begin position="284"/>
        <end position="304"/>
    </location>
</feature>
<feature type="domain" description="EamA">
    <location>
        <begin position="33"/>
        <end position="152"/>
    </location>
</feature>
<organism>
    <name type="scientific">Arabidopsis thaliana</name>
    <name type="common">Mouse-ear cress</name>
    <dbReference type="NCBI Taxonomy" id="3702"/>
    <lineage>
        <taxon>Eukaryota</taxon>
        <taxon>Viridiplantae</taxon>
        <taxon>Streptophyta</taxon>
        <taxon>Embryophyta</taxon>
        <taxon>Tracheophyta</taxon>
        <taxon>Spermatophyta</taxon>
        <taxon>Magnoliopsida</taxon>
        <taxon>eudicotyledons</taxon>
        <taxon>Gunneridae</taxon>
        <taxon>Pentapetalae</taxon>
        <taxon>rosids</taxon>
        <taxon>malvids</taxon>
        <taxon>Brassicales</taxon>
        <taxon>Brassicaceae</taxon>
        <taxon>Camelineae</taxon>
        <taxon>Arabidopsis</taxon>
    </lineage>
</organism>
<name>GONS5_ARATH</name>
<reference key="1">
    <citation type="journal article" date="2004" name="Mol. Genet. Genomics">
        <title>Arabidopsis thaliana expresses multiple Golgi-localised nucleotide-sugar transporters related to GONST1.</title>
        <authorList>
            <person name="Handford M.G."/>
            <person name="Sicilia F."/>
            <person name="Brandizzi F."/>
            <person name="Chung J.H."/>
            <person name="Dupree P."/>
        </authorList>
    </citation>
    <scope>NUCLEOTIDE SEQUENCE [MRNA]</scope>
    <scope>FUNCTION</scope>
    <scope>SUBCELLULAR LOCATION</scope>
    <scope>TISSUE SPECIFICITY</scope>
    <source>
        <strain>cv. Columbia</strain>
    </source>
</reference>
<reference key="2">
    <citation type="journal article" date="2000" name="Nature">
        <title>Sequence and analysis of chromosome 1 of the plant Arabidopsis thaliana.</title>
        <authorList>
            <person name="Theologis A."/>
            <person name="Ecker J.R."/>
            <person name="Palm C.J."/>
            <person name="Federspiel N.A."/>
            <person name="Kaul S."/>
            <person name="White O."/>
            <person name="Alonso J."/>
            <person name="Altafi H."/>
            <person name="Araujo R."/>
            <person name="Bowman C.L."/>
            <person name="Brooks S.Y."/>
            <person name="Buehler E."/>
            <person name="Chan A."/>
            <person name="Chao Q."/>
            <person name="Chen H."/>
            <person name="Cheuk R.F."/>
            <person name="Chin C.W."/>
            <person name="Chung M.K."/>
            <person name="Conn L."/>
            <person name="Conway A.B."/>
            <person name="Conway A.R."/>
            <person name="Creasy T.H."/>
            <person name="Dewar K."/>
            <person name="Dunn P."/>
            <person name="Etgu P."/>
            <person name="Feldblyum T.V."/>
            <person name="Feng J.-D."/>
            <person name="Fong B."/>
            <person name="Fujii C.Y."/>
            <person name="Gill J.E."/>
            <person name="Goldsmith A.D."/>
            <person name="Haas B."/>
            <person name="Hansen N.F."/>
            <person name="Hughes B."/>
            <person name="Huizar L."/>
            <person name="Hunter J.L."/>
            <person name="Jenkins J."/>
            <person name="Johnson-Hopson C."/>
            <person name="Khan S."/>
            <person name="Khaykin E."/>
            <person name="Kim C.J."/>
            <person name="Koo H.L."/>
            <person name="Kremenetskaia I."/>
            <person name="Kurtz D.B."/>
            <person name="Kwan A."/>
            <person name="Lam B."/>
            <person name="Langin-Hooper S."/>
            <person name="Lee A."/>
            <person name="Lee J.M."/>
            <person name="Lenz C.A."/>
            <person name="Li J.H."/>
            <person name="Li Y.-P."/>
            <person name="Lin X."/>
            <person name="Liu S.X."/>
            <person name="Liu Z.A."/>
            <person name="Luros J.S."/>
            <person name="Maiti R."/>
            <person name="Marziali A."/>
            <person name="Militscher J."/>
            <person name="Miranda M."/>
            <person name="Nguyen M."/>
            <person name="Nierman W.C."/>
            <person name="Osborne B.I."/>
            <person name="Pai G."/>
            <person name="Peterson J."/>
            <person name="Pham P.K."/>
            <person name="Rizzo M."/>
            <person name="Rooney T."/>
            <person name="Rowley D."/>
            <person name="Sakano H."/>
            <person name="Salzberg S.L."/>
            <person name="Schwartz J.R."/>
            <person name="Shinn P."/>
            <person name="Southwick A.M."/>
            <person name="Sun H."/>
            <person name="Tallon L.J."/>
            <person name="Tambunga G."/>
            <person name="Toriumi M.J."/>
            <person name="Town C.D."/>
            <person name="Utterback T."/>
            <person name="Van Aken S."/>
            <person name="Vaysberg M."/>
            <person name="Vysotskaia V.S."/>
            <person name="Walker M."/>
            <person name="Wu D."/>
            <person name="Yu G."/>
            <person name="Fraser C.M."/>
            <person name="Venter J.C."/>
            <person name="Davis R.W."/>
        </authorList>
    </citation>
    <scope>NUCLEOTIDE SEQUENCE [LARGE SCALE GENOMIC DNA]</scope>
    <source>
        <strain>cv. Columbia</strain>
        <tissue>Callus</tissue>
    </source>
</reference>
<reference key="3">
    <citation type="journal article" date="2017" name="Plant J.">
        <title>Araport11: a complete reannotation of the Arabidopsis thaliana reference genome.</title>
        <authorList>
            <person name="Cheng C.Y."/>
            <person name="Krishnakumar V."/>
            <person name="Chan A.P."/>
            <person name="Thibaud-Nissen F."/>
            <person name="Schobel S."/>
            <person name="Town C.D."/>
        </authorList>
    </citation>
    <scope>GENOME REANNOTATION</scope>
    <source>
        <strain>cv. Columbia</strain>
    </source>
</reference>
<reference key="4">
    <citation type="journal article" date="2006" name="Plant Biotechnol. J.">
        <title>Simultaneous high-throughput recombinational cloning of open reading frames in closed and open configurations.</title>
        <authorList>
            <person name="Underwood B.A."/>
            <person name="Vanderhaeghen R."/>
            <person name="Whitford R."/>
            <person name="Town C.D."/>
            <person name="Hilson P."/>
        </authorList>
    </citation>
    <scope>NUCLEOTIDE SEQUENCE [LARGE SCALE MRNA]</scope>
    <source>
        <strain>cv. Columbia</strain>
    </source>
</reference>
<reference key="5">
    <citation type="journal article" date="2014" name="Proc. Natl. Acad. Sci. U.S.A.">
        <title>The Golgi localized bifunctional UDP-rhamnose/UDP-galactose transporter family of Arabidopsis.</title>
        <authorList>
            <person name="Rautengarten C."/>
            <person name="Ebert B."/>
            <person name="Moreno I."/>
            <person name="Temple H."/>
            <person name="Herter T."/>
            <person name="Link B."/>
            <person name="Donas-Cofre D."/>
            <person name="Moreno A."/>
            <person name="Saez-Aguayo S."/>
            <person name="Blanco F."/>
            <person name="Mortimer J.C."/>
            <person name="Schultink A."/>
            <person name="Reiter W.D."/>
            <person name="Dupree P."/>
            <person name="Pauly M."/>
            <person name="Heazlewood J.L."/>
            <person name="Scheller H.V."/>
            <person name="Orellana A."/>
        </authorList>
    </citation>
    <scope>GENE FAMILY</scope>
</reference>